<dbReference type="EC" id="5.4.2.10" evidence="1"/>
<dbReference type="EMBL" id="AE013598">
    <property type="protein sequence ID" value="AAW76503.1"/>
    <property type="molecule type" value="Genomic_DNA"/>
</dbReference>
<dbReference type="SMR" id="Q5GXR8"/>
<dbReference type="STRING" id="291331.XOO3249"/>
<dbReference type="KEGG" id="xoo:XOO3249"/>
<dbReference type="PATRIC" id="fig|291331.8.peg.3597"/>
<dbReference type="HOGENOM" id="CLU_016950_7_0_6"/>
<dbReference type="Proteomes" id="UP000006735">
    <property type="component" value="Chromosome"/>
</dbReference>
<dbReference type="GO" id="GO:0005829">
    <property type="term" value="C:cytosol"/>
    <property type="evidence" value="ECO:0007669"/>
    <property type="project" value="TreeGrafter"/>
</dbReference>
<dbReference type="GO" id="GO:0000287">
    <property type="term" value="F:magnesium ion binding"/>
    <property type="evidence" value="ECO:0007669"/>
    <property type="project" value="UniProtKB-UniRule"/>
</dbReference>
<dbReference type="GO" id="GO:0008966">
    <property type="term" value="F:phosphoglucosamine mutase activity"/>
    <property type="evidence" value="ECO:0007669"/>
    <property type="project" value="UniProtKB-UniRule"/>
</dbReference>
<dbReference type="GO" id="GO:0004615">
    <property type="term" value="F:phosphomannomutase activity"/>
    <property type="evidence" value="ECO:0007669"/>
    <property type="project" value="TreeGrafter"/>
</dbReference>
<dbReference type="GO" id="GO:0005975">
    <property type="term" value="P:carbohydrate metabolic process"/>
    <property type="evidence" value="ECO:0007669"/>
    <property type="project" value="InterPro"/>
</dbReference>
<dbReference type="GO" id="GO:0009252">
    <property type="term" value="P:peptidoglycan biosynthetic process"/>
    <property type="evidence" value="ECO:0007669"/>
    <property type="project" value="TreeGrafter"/>
</dbReference>
<dbReference type="GO" id="GO:0006048">
    <property type="term" value="P:UDP-N-acetylglucosamine biosynthetic process"/>
    <property type="evidence" value="ECO:0007669"/>
    <property type="project" value="TreeGrafter"/>
</dbReference>
<dbReference type="CDD" id="cd05802">
    <property type="entry name" value="GlmM"/>
    <property type="match status" value="1"/>
</dbReference>
<dbReference type="FunFam" id="3.30.310.50:FF:000001">
    <property type="entry name" value="Phosphoglucosamine mutase"/>
    <property type="match status" value="1"/>
</dbReference>
<dbReference type="FunFam" id="3.40.120.10:FF:000001">
    <property type="entry name" value="Phosphoglucosamine mutase"/>
    <property type="match status" value="1"/>
</dbReference>
<dbReference type="FunFam" id="3.40.120.10:FF:000003">
    <property type="entry name" value="Phosphoglucosamine mutase"/>
    <property type="match status" value="1"/>
</dbReference>
<dbReference type="Gene3D" id="3.40.120.10">
    <property type="entry name" value="Alpha-D-Glucose-1,6-Bisphosphate, subunit A, domain 3"/>
    <property type="match status" value="3"/>
</dbReference>
<dbReference type="Gene3D" id="3.30.310.50">
    <property type="entry name" value="Alpha-D-phosphohexomutase, C-terminal domain"/>
    <property type="match status" value="1"/>
</dbReference>
<dbReference type="HAMAP" id="MF_01554_B">
    <property type="entry name" value="GlmM_B"/>
    <property type="match status" value="1"/>
</dbReference>
<dbReference type="InterPro" id="IPR005844">
    <property type="entry name" value="A-D-PHexomutase_a/b/a-I"/>
</dbReference>
<dbReference type="InterPro" id="IPR016055">
    <property type="entry name" value="A-D-PHexomutase_a/b/a-I/II/III"/>
</dbReference>
<dbReference type="InterPro" id="IPR005845">
    <property type="entry name" value="A-D-PHexomutase_a/b/a-II"/>
</dbReference>
<dbReference type="InterPro" id="IPR005846">
    <property type="entry name" value="A-D-PHexomutase_a/b/a-III"/>
</dbReference>
<dbReference type="InterPro" id="IPR005843">
    <property type="entry name" value="A-D-PHexomutase_C"/>
</dbReference>
<dbReference type="InterPro" id="IPR036900">
    <property type="entry name" value="A-D-PHexomutase_C_sf"/>
</dbReference>
<dbReference type="InterPro" id="IPR016066">
    <property type="entry name" value="A-D-PHexomutase_CS"/>
</dbReference>
<dbReference type="InterPro" id="IPR005841">
    <property type="entry name" value="Alpha-D-phosphohexomutase_SF"/>
</dbReference>
<dbReference type="InterPro" id="IPR006352">
    <property type="entry name" value="GlmM_bact"/>
</dbReference>
<dbReference type="InterPro" id="IPR050060">
    <property type="entry name" value="Phosphoglucosamine_mutase"/>
</dbReference>
<dbReference type="NCBIfam" id="TIGR01455">
    <property type="entry name" value="glmM"/>
    <property type="match status" value="1"/>
</dbReference>
<dbReference type="NCBIfam" id="NF008139">
    <property type="entry name" value="PRK10887.1"/>
    <property type="match status" value="1"/>
</dbReference>
<dbReference type="PANTHER" id="PTHR42946:SF1">
    <property type="entry name" value="PHOSPHOGLUCOMUTASE (ALPHA-D-GLUCOSE-1,6-BISPHOSPHATE-DEPENDENT)"/>
    <property type="match status" value="1"/>
</dbReference>
<dbReference type="PANTHER" id="PTHR42946">
    <property type="entry name" value="PHOSPHOHEXOSE MUTASE"/>
    <property type="match status" value="1"/>
</dbReference>
<dbReference type="Pfam" id="PF02878">
    <property type="entry name" value="PGM_PMM_I"/>
    <property type="match status" value="1"/>
</dbReference>
<dbReference type="Pfam" id="PF02879">
    <property type="entry name" value="PGM_PMM_II"/>
    <property type="match status" value="1"/>
</dbReference>
<dbReference type="Pfam" id="PF02880">
    <property type="entry name" value="PGM_PMM_III"/>
    <property type="match status" value="1"/>
</dbReference>
<dbReference type="Pfam" id="PF00408">
    <property type="entry name" value="PGM_PMM_IV"/>
    <property type="match status" value="1"/>
</dbReference>
<dbReference type="PRINTS" id="PR00509">
    <property type="entry name" value="PGMPMM"/>
</dbReference>
<dbReference type="SUPFAM" id="SSF55957">
    <property type="entry name" value="Phosphoglucomutase, C-terminal domain"/>
    <property type="match status" value="1"/>
</dbReference>
<dbReference type="SUPFAM" id="SSF53738">
    <property type="entry name" value="Phosphoglucomutase, first 3 domains"/>
    <property type="match status" value="3"/>
</dbReference>
<dbReference type="PROSITE" id="PS00710">
    <property type="entry name" value="PGM_PMM"/>
    <property type="match status" value="1"/>
</dbReference>
<proteinExistence type="inferred from homology"/>
<name>GLMM_XANOR</name>
<protein>
    <recommendedName>
        <fullName evidence="1">Phosphoglucosamine mutase</fullName>
        <ecNumber evidence="1">5.4.2.10</ecNumber>
    </recommendedName>
</protein>
<accession>Q5GXR8</accession>
<reference key="1">
    <citation type="journal article" date="2005" name="Nucleic Acids Res.">
        <title>The genome sequence of Xanthomonas oryzae pathovar oryzae KACC10331, the bacterial blight pathogen of rice.</title>
        <authorList>
            <person name="Lee B.-M."/>
            <person name="Park Y.-J."/>
            <person name="Park D.-S."/>
            <person name="Kang H.-W."/>
            <person name="Kim J.-G."/>
            <person name="Song E.-S."/>
            <person name="Park I.-C."/>
            <person name="Yoon U.-H."/>
            <person name="Hahn J.-H."/>
            <person name="Koo B.-S."/>
            <person name="Lee G.-B."/>
            <person name="Kim H."/>
            <person name="Park H.-S."/>
            <person name="Yoon K.-O."/>
            <person name="Kim J.-H."/>
            <person name="Jung C.-H."/>
            <person name="Koh N.-H."/>
            <person name="Seo J.-S."/>
            <person name="Go S.-J."/>
        </authorList>
    </citation>
    <scope>NUCLEOTIDE SEQUENCE [LARGE SCALE GENOMIC DNA]</scope>
    <source>
        <strain>KACC10331 / KXO85</strain>
    </source>
</reference>
<sequence length="449" mass="47328">MSARKYFGTDGIRGRVGQGVISADFVLRLGNALGRVLTQIRGKRPLVLIGKDTRISGYMFEAALEAGLVAAGADVQLIGPMPTPAIAFLTSTLRADAGVVISASHNPHYDNGIKFFSAEGEKLDDATEAAIEAALDAPFHTVESERLGKAIRTRDAIGRYIEFCKASVARGFTLKWLKMVLDCAHGATYHIAPMLFRELGAEVVVIGAAPDGLNINAGVGSTHIDNLAAKVREYGAHLGIAFDGDGDRVLMADDQGNPVDGDDLLYVLARSWQASGRLTGTVVGTLMTNYGLEQALAALNIPFQRAKVGDRYVHQALVEGGGTLGGETSGHLLCLDRATTGDGIVSALQVLEALGRDGHSLRKALSSLSKVPQKTVNVRLDGGAAKAIVEAANVQQALQQAQAAVQGRGRAFLRPSGTEPVVRVTVEADDARLMQDTLDRLSGAVRDAA</sequence>
<feature type="chain" id="PRO_0000148007" description="Phosphoglucosamine mutase">
    <location>
        <begin position="1"/>
        <end position="449"/>
    </location>
</feature>
<feature type="active site" description="Phosphoserine intermediate" evidence="1">
    <location>
        <position position="104"/>
    </location>
</feature>
<feature type="binding site" description="via phosphate group" evidence="1">
    <location>
        <position position="104"/>
    </location>
    <ligand>
        <name>Mg(2+)</name>
        <dbReference type="ChEBI" id="CHEBI:18420"/>
    </ligand>
</feature>
<feature type="binding site" evidence="1">
    <location>
        <position position="243"/>
    </location>
    <ligand>
        <name>Mg(2+)</name>
        <dbReference type="ChEBI" id="CHEBI:18420"/>
    </ligand>
</feature>
<feature type="binding site" evidence="1">
    <location>
        <position position="245"/>
    </location>
    <ligand>
        <name>Mg(2+)</name>
        <dbReference type="ChEBI" id="CHEBI:18420"/>
    </ligand>
</feature>
<feature type="binding site" evidence="1">
    <location>
        <position position="247"/>
    </location>
    <ligand>
        <name>Mg(2+)</name>
        <dbReference type="ChEBI" id="CHEBI:18420"/>
    </ligand>
</feature>
<feature type="modified residue" description="Phosphoserine" evidence="1">
    <location>
        <position position="104"/>
    </location>
</feature>
<comment type="function">
    <text evidence="1">Catalyzes the conversion of glucosamine-6-phosphate to glucosamine-1-phosphate.</text>
</comment>
<comment type="catalytic activity">
    <reaction evidence="1">
        <text>alpha-D-glucosamine 1-phosphate = D-glucosamine 6-phosphate</text>
        <dbReference type="Rhea" id="RHEA:23424"/>
        <dbReference type="ChEBI" id="CHEBI:58516"/>
        <dbReference type="ChEBI" id="CHEBI:58725"/>
        <dbReference type="EC" id="5.4.2.10"/>
    </reaction>
</comment>
<comment type="cofactor">
    <cofactor evidence="1">
        <name>Mg(2+)</name>
        <dbReference type="ChEBI" id="CHEBI:18420"/>
    </cofactor>
    <text evidence="1">Binds 1 Mg(2+) ion per subunit.</text>
</comment>
<comment type="PTM">
    <text evidence="1">Activated by phosphorylation.</text>
</comment>
<comment type="similarity">
    <text evidence="1">Belongs to the phosphohexose mutase family.</text>
</comment>
<gene>
    <name evidence="1" type="primary">glmM</name>
    <name type="ordered locus">XOO3249</name>
</gene>
<keyword id="KW-0413">Isomerase</keyword>
<keyword id="KW-0460">Magnesium</keyword>
<keyword id="KW-0479">Metal-binding</keyword>
<keyword id="KW-0597">Phosphoprotein</keyword>
<keyword id="KW-1185">Reference proteome</keyword>
<evidence type="ECO:0000255" key="1">
    <source>
        <dbReference type="HAMAP-Rule" id="MF_01554"/>
    </source>
</evidence>
<organism>
    <name type="scientific">Xanthomonas oryzae pv. oryzae (strain KACC10331 / KXO85)</name>
    <dbReference type="NCBI Taxonomy" id="291331"/>
    <lineage>
        <taxon>Bacteria</taxon>
        <taxon>Pseudomonadati</taxon>
        <taxon>Pseudomonadota</taxon>
        <taxon>Gammaproteobacteria</taxon>
        <taxon>Lysobacterales</taxon>
        <taxon>Lysobacteraceae</taxon>
        <taxon>Xanthomonas</taxon>
    </lineage>
</organism>